<evidence type="ECO:0000255" key="1">
    <source>
        <dbReference type="HAMAP-Rule" id="MF_00715"/>
    </source>
</evidence>
<proteinExistence type="inferred from homology"/>
<dbReference type="EMBL" id="CP000891">
    <property type="protein sequence ID" value="ABX50760.1"/>
    <property type="molecule type" value="Genomic_DNA"/>
</dbReference>
<dbReference type="RefSeq" id="WP_006080410.1">
    <property type="nucleotide sequence ID" value="NC_009997.1"/>
</dbReference>
<dbReference type="SMR" id="A9L1G4"/>
<dbReference type="KEGG" id="sbn:Sbal195_3598"/>
<dbReference type="HOGENOM" id="CLU_180796_4_0_6"/>
<dbReference type="Proteomes" id="UP000000770">
    <property type="component" value="Chromosome"/>
</dbReference>
<dbReference type="Gene3D" id="1.20.5.300">
    <property type="match status" value="1"/>
</dbReference>
<dbReference type="HAMAP" id="MF_00715">
    <property type="entry name" value="SlyX"/>
    <property type="match status" value="1"/>
</dbReference>
<dbReference type="InterPro" id="IPR007236">
    <property type="entry name" value="SlyX"/>
</dbReference>
<dbReference type="PANTHER" id="PTHR36508">
    <property type="entry name" value="PROTEIN SLYX"/>
    <property type="match status" value="1"/>
</dbReference>
<dbReference type="PANTHER" id="PTHR36508:SF1">
    <property type="entry name" value="PROTEIN SLYX"/>
    <property type="match status" value="1"/>
</dbReference>
<dbReference type="Pfam" id="PF04102">
    <property type="entry name" value="SlyX"/>
    <property type="match status" value="1"/>
</dbReference>
<organism>
    <name type="scientific">Shewanella baltica (strain OS195)</name>
    <dbReference type="NCBI Taxonomy" id="399599"/>
    <lineage>
        <taxon>Bacteria</taxon>
        <taxon>Pseudomonadati</taxon>
        <taxon>Pseudomonadota</taxon>
        <taxon>Gammaproteobacteria</taxon>
        <taxon>Alteromonadales</taxon>
        <taxon>Shewanellaceae</taxon>
        <taxon>Shewanella</taxon>
    </lineage>
</organism>
<accession>A9L1G4</accession>
<reference key="1">
    <citation type="submission" date="2007-11" db="EMBL/GenBank/DDBJ databases">
        <title>Complete sequence of chromosome of Shewanella baltica OS195.</title>
        <authorList>
            <consortium name="US DOE Joint Genome Institute"/>
            <person name="Copeland A."/>
            <person name="Lucas S."/>
            <person name="Lapidus A."/>
            <person name="Barry K."/>
            <person name="Glavina del Rio T."/>
            <person name="Dalin E."/>
            <person name="Tice H."/>
            <person name="Pitluck S."/>
            <person name="Chain P."/>
            <person name="Malfatti S."/>
            <person name="Shin M."/>
            <person name="Vergez L."/>
            <person name="Schmutz J."/>
            <person name="Larimer F."/>
            <person name="Land M."/>
            <person name="Hauser L."/>
            <person name="Kyrpides N."/>
            <person name="Kim E."/>
            <person name="Brettar I."/>
            <person name="Rodrigues J."/>
            <person name="Konstantinidis K."/>
            <person name="Klappenbach J."/>
            <person name="Hofle M."/>
            <person name="Tiedje J."/>
            <person name="Richardson P."/>
        </authorList>
    </citation>
    <scope>NUCLEOTIDE SEQUENCE [LARGE SCALE GENOMIC DNA]</scope>
    <source>
        <strain>OS195</strain>
    </source>
</reference>
<sequence>MQGVQAQIEDLETKLAFQELTVEELNQEVIKLNRLVAHQQHQIHMLIGKLQDMEPSNMATQAEETPPPHY</sequence>
<protein>
    <recommendedName>
        <fullName evidence="1">Protein SlyX homolog</fullName>
    </recommendedName>
</protein>
<feature type="chain" id="PRO_1000083245" description="Protein SlyX homolog">
    <location>
        <begin position="1"/>
        <end position="70"/>
    </location>
</feature>
<comment type="similarity">
    <text evidence="1">Belongs to the SlyX family.</text>
</comment>
<gene>
    <name evidence="1" type="primary">slyX</name>
    <name type="ordered locus">Sbal195_3598</name>
</gene>
<name>SLYX_SHEB9</name>